<geneLocation type="chloroplast"/>
<reference key="1">
    <citation type="journal article" date="2006" name="Science">
        <title>The genome of black cottonwood, Populus trichocarpa (Torr. &amp; Gray).</title>
        <authorList>
            <person name="Tuskan G.A."/>
            <person name="Difazio S."/>
            <person name="Jansson S."/>
            <person name="Bohlmann J."/>
            <person name="Grigoriev I."/>
            <person name="Hellsten U."/>
            <person name="Putnam N."/>
            <person name="Ralph S."/>
            <person name="Rombauts S."/>
            <person name="Salamov A."/>
            <person name="Schein J."/>
            <person name="Sterck L."/>
            <person name="Aerts A."/>
            <person name="Bhalerao R.R."/>
            <person name="Bhalerao R.P."/>
            <person name="Blaudez D."/>
            <person name="Boerjan W."/>
            <person name="Brun A."/>
            <person name="Brunner A."/>
            <person name="Busov V."/>
            <person name="Campbell M."/>
            <person name="Carlson J."/>
            <person name="Chalot M."/>
            <person name="Chapman J."/>
            <person name="Chen G.-L."/>
            <person name="Cooper D."/>
            <person name="Coutinho P.M."/>
            <person name="Couturier J."/>
            <person name="Covert S."/>
            <person name="Cronk Q."/>
            <person name="Cunningham R."/>
            <person name="Davis J."/>
            <person name="Degroeve S."/>
            <person name="Dejardin A."/>
            <person name="dePamphilis C.W."/>
            <person name="Detter J."/>
            <person name="Dirks B."/>
            <person name="Dubchak I."/>
            <person name="Duplessis S."/>
            <person name="Ehlting J."/>
            <person name="Ellis B."/>
            <person name="Gendler K."/>
            <person name="Goodstein D."/>
            <person name="Gribskov M."/>
            <person name="Grimwood J."/>
            <person name="Groover A."/>
            <person name="Gunter L."/>
            <person name="Hamberger B."/>
            <person name="Heinze B."/>
            <person name="Helariutta Y."/>
            <person name="Henrissat B."/>
            <person name="Holligan D."/>
            <person name="Holt R."/>
            <person name="Huang W."/>
            <person name="Islam-Faridi N."/>
            <person name="Jones S."/>
            <person name="Jones-Rhoades M."/>
            <person name="Jorgensen R."/>
            <person name="Joshi C."/>
            <person name="Kangasjaervi J."/>
            <person name="Karlsson J."/>
            <person name="Kelleher C."/>
            <person name="Kirkpatrick R."/>
            <person name="Kirst M."/>
            <person name="Kohler A."/>
            <person name="Kalluri U."/>
            <person name="Larimer F."/>
            <person name="Leebens-Mack J."/>
            <person name="Leple J.-C."/>
            <person name="Locascio P."/>
            <person name="Lou Y."/>
            <person name="Lucas S."/>
            <person name="Martin F."/>
            <person name="Montanini B."/>
            <person name="Napoli C."/>
            <person name="Nelson D.R."/>
            <person name="Nelson C."/>
            <person name="Nieminen K."/>
            <person name="Nilsson O."/>
            <person name="Pereda V."/>
            <person name="Peter G."/>
            <person name="Philippe R."/>
            <person name="Pilate G."/>
            <person name="Poliakov A."/>
            <person name="Razumovskaya J."/>
            <person name="Richardson P."/>
            <person name="Rinaldi C."/>
            <person name="Ritland K."/>
            <person name="Rouze P."/>
            <person name="Ryaboy D."/>
            <person name="Schmutz J."/>
            <person name="Schrader J."/>
            <person name="Segerman B."/>
            <person name="Shin H."/>
            <person name="Siddiqui A."/>
            <person name="Sterky F."/>
            <person name="Terry A."/>
            <person name="Tsai C.-J."/>
            <person name="Uberbacher E."/>
            <person name="Unneberg P."/>
            <person name="Vahala J."/>
            <person name="Wall K."/>
            <person name="Wessler S."/>
            <person name="Yang G."/>
            <person name="Yin T."/>
            <person name="Douglas C."/>
            <person name="Marra M."/>
            <person name="Sandberg G."/>
            <person name="Van de Peer Y."/>
            <person name="Rokhsar D.S."/>
        </authorList>
    </citation>
    <scope>NUCLEOTIDE SEQUENCE [LARGE SCALE GENOMIC DNA]</scope>
    <source>
        <strain>cv. Nisqually</strain>
    </source>
</reference>
<protein>
    <recommendedName>
        <fullName evidence="2">Photosystem I iron-sulfur center</fullName>
        <ecNumber evidence="2">1.97.1.12</ecNumber>
    </recommendedName>
    <alternativeName>
        <fullName evidence="2">9 kDa polypeptide</fullName>
    </alternativeName>
    <alternativeName>
        <fullName evidence="2">PSI-C</fullName>
    </alternativeName>
    <alternativeName>
        <fullName evidence="2">Photosystem I subunit VII</fullName>
    </alternativeName>
    <alternativeName>
        <fullName evidence="2">PsaC</fullName>
    </alternativeName>
</protein>
<feature type="initiator methionine" description="Removed" evidence="1">
    <location>
        <position position="1"/>
    </location>
</feature>
<feature type="chain" id="PRO_0000292128" description="Photosystem I iron-sulfur center">
    <location>
        <begin position="2"/>
        <end position="81"/>
    </location>
</feature>
<feature type="domain" description="4Fe-4S ferredoxin-type 1" evidence="2">
    <location>
        <begin position="2"/>
        <end position="31"/>
    </location>
</feature>
<feature type="domain" description="4Fe-4S ferredoxin-type 2" evidence="2">
    <location>
        <begin position="39"/>
        <end position="68"/>
    </location>
</feature>
<feature type="binding site" evidence="2">
    <location>
        <position position="11"/>
    </location>
    <ligand>
        <name>[4Fe-4S] cluster</name>
        <dbReference type="ChEBI" id="CHEBI:49883"/>
        <label>1</label>
    </ligand>
</feature>
<feature type="binding site" evidence="2">
    <location>
        <position position="14"/>
    </location>
    <ligand>
        <name>[4Fe-4S] cluster</name>
        <dbReference type="ChEBI" id="CHEBI:49883"/>
        <label>1</label>
    </ligand>
</feature>
<feature type="binding site" evidence="2">
    <location>
        <position position="17"/>
    </location>
    <ligand>
        <name>[4Fe-4S] cluster</name>
        <dbReference type="ChEBI" id="CHEBI:49883"/>
        <label>1</label>
    </ligand>
</feature>
<feature type="binding site" evidence="2">
    <location>
        <position position="21"/>
    </location>
    <ligand>
        <name>[4Fe-4S] cluster</name>
        <dbReference type="ChEBI" id="CHEBI:49883"/>
        <label>2</label>
    </ligand>
</feature>
<feature type="binding site" evidence="2">
    <location>
        <position position="48"/>
    </location>
    <ligand>
        <name>[4Fe-4S] cluster</name>
        <dbReference type="ChEBI" id="CHEBI:49883"/>
        <label>2</label>
    </ligand>
</feature>
<feature type="binding site" evidence="2">
    <location>
        <position position="51"/>
    </location>
    <ligand>
        <name>[4Fe-4S] cluster</name>
        <dbReference type="ChEBI" id="CHEBI:49883"/>
        <label>2</label>
    </ligand>
</feature>
<feature type="binding site" evidence="2">
    <location>
        <position position="54"/>
    </location>
    <ligand>
        <name>[4Fe-4S] cluster</name>
        <dbReference type="ChEBI" id="CHEBI:49883"/>
        <label>2</label>
    </ligand>
</feature>
<feature type="binding site" evidence="2">
    <location>
        <position position="58"/>
    </location>
    <ligand>
        <name>[4Fe-4S] cluster</name>
        <dbReference type="ChEBI" id="CHEBI:49883"/>
        <label>1</label>
    </ligand>
</feature>
<comment type="function">
    <text evidence="2">Apoprotein for the two 4Fe-4S centers FA and FB of photosystem I (PSI); essential for photochemical activity. FB is the terminal electron acceptor of PSI, donating electrons to ferredoxin. The C-terminus interacts with PsaA/B/D and helps assemble the protein into the PSI complex. Required for binding of PsaD and PsaE to PSI. PSI is a plastocyanin-ferredoxin oxidoreductase, converting photonic excitation into a charge separation, which transfers an electron from the donor P700 chlorophyll pair to the spectroscopically characterized acceptors A0, A1, FX, FA and FB in turn.</text>
</comment>
<comment type="catalytic activity">
    <reaction evidence="2">
        <text>reduced [plastocyanin] + hnu + oxidized [2Fe-2S]-[ferredoxin] = oxidized [plastocyanin] + reduced [2Fe-2S]-[ferredoxin]</text>
        <dbReference type="Rhea" id="RHEA:30407"/>
        <dbReference type="Rhea" id="RHEA-COMP:10000"/>
        <dbReference type="Rhea" id="RHEA-COMP:10001"/>
        <dbReference type="Rhea" id="RHEA-COMP:10039"/>
        <dbReference type="Rhea" id="RHEA-COMP:10040"/>
        <dbReference type="ChEBI" id="CHEBI:29036"/>
        <dbReference type="ChEBI" id="CHEBI:30212"/>
        <dbReference type="ChEBI" id="CHEBI:33737"/>
        <dbReference type="ChEBI" id="CHEBI:33738"/>
        <dbReference type="ChEBI" id="CHEBI:49552"/>
        <dbReference type="EC" id="1.97.1.12"/>
    </reaction>
</comment>
<comment type="cofactor">
    <cofactor evidence="2">
        <name>[4Fe-4S] cluster</name>
        <dbReference type="ChEBI" id="CHEBI:49883"/>
    </cofactor>
    <text evidence="2">Binds 2 [4Fe-4S] clusters. Cluster 2 is most probably the spectroscopically characterized electron acceptor FA and cluster 1 is most probably FB.</text>
</comment>
<comment type="subunit">
    <text evidence="2">The eukaryotic PSI reaction center is composed of at least 11 subunits.</text>
</comment>
<comment type="subcellular location">
    <subcellularLocation>
        <location evidence="2">Plastid</location>
        <location evidence="2">Chloroplast thylakoid membrane</location>
        <topology evidence="2">Peripheral membrane protein</topology>
        <orientation evidence="2">Stromal side</orientation>
    </subcellularLocation>
</comment>
<name>PSAC_POPTR</name>
<sequence>MSHSVKIYDTCIGCTQCVRACPTDVLEMIPWDGCKAKQIASAPRTEDCVGCKRCESACPTDFLSVRVYLWHETTRSMGLAY</sequence>
<keyword id="KW-0004">4Fe-4S</keyword>
<keyword id="KW-0150">Chloroplast</keyword>
<keyword id="KW-0249">Electron transport</keyword>
<keyword id="KW-0408">Iron</keyword>
<keyword id="KW-0411">Iron-sulfur</keyword>
<keyword id="KW-0472">Membrane</keyword>
<keyword id="KW-0479">Metal-binding</keyword>
<keyword id="KW-0560">Oxidoreductase</keyword>
<keyword id="KW-0602">Photosynthesis</keyword>
<keyword id="KW-0603">Photosystem I</keyword>
<keyword id="KW-0934">Plastid</keyword>
<keyword id="KW-1185">Reference proteome</keyword>
<keyword id="KW-0677">Repeat</keyword>
<keyword id="KW-0793">Thylakoid</keyword>
<keyword id="KW-0813">Transport</keyword>
<dbReference type="EC" id="1.97.1.12" evidence="2"/>
<dbReference type="EMBL" id="EF489041">
    <property type="protein sequence ID" value="ABO36762.1"/>
    <property type="molecule type" value="Genomic_DNA"/>
</dbReference>
<dbReference type="RefSeq" id="YP_001109558.1">
    <property type="nucleotide sequence ID" value="NC_009143.1"/>
</dbReference>
<dbReference type="SMR" id="A4GYW7"/>
<dbReference type="FunCoup" id="A4GYW7">
    <property type="interactions" value="319"/>
</dbReference>
<dbReference type="STRING" id="3694.A4GYW7"/>
<dbReference type="GeneID" id="4929741"/>
<dbReference type="KEGG" id="pop:4929741"/>
<dbReference type="InParanoid" id="A4GYW7"/>
<dbReference type="OrthoDB" id="9at2759"/>
<dbReference type="Proteomes" id="UP000006729">
    <property type="component" value="Chloroplast"/>
</dbReference>
<dbReference type="GO" id="GO:0009535">
    <property type="term" value="C:chloroplast thylakoid membrane"/>
    <property type="evidence" value="ECO:0007669"/>
    <property type="project" value="UniProtKB-SubCell"/>
</dbReference>
<dbReference type="GO" id="GO:0009522">
    <property type="term" value="C:photosystem I"/>
    <property type="evidence" value="ECO:0007669"/>
    <property type="project" value="UniProtKB-KW"/>
</dbReference>
<dbReference type="GO" id="GO:0051539">
    <property type="term" value="F:4 iron, 4 sulfur cluster binding"/>
    <property type="evidence" value="ECO:0007669"/>
    <property type="project" value="UniProtKB-KW"/>
</dbReference>
<dbReference type="GO" id="GO:0009055">
    <property type="term" value="F:electron transfer activity"/>
    <property type="evidence" value="ECO:0007669"/>
    <property type="project" value="UniProtKB-UniRule"/>
</dbReference>
<dbReference type="GO" id="GO:0046872">
    <property type="term" value="F:metal ion binding"/>
    <property type="evidence" value="ECO:0007669"/>
    <property type="project" value="UniProtKB-KW"/>
</dbReference>
<dbReference type="GO" id="GO:0016491">
    <property type="term" value="F:oxidoreductase activity"/>
    <property type="evidence" value="ECO:0007669"/>
    <property type="project" value="UniProtKB-KW"/>
</dbReference>
<dbReference type="GO" id="GO:0015979">
    <property type="term" value="P:photosynthesis"/>
    <property type="evidence" value="ECO:0000318"/>
    <property type="project" value="GO_Central"/>
</dbReference>
<dbReference type="GO" id="GO:0009773">
    <property type="term" value="P:photosynthetic electron transport in photosystem I"/>
    <property type="evidence" value="ECO:0007669"/>
    <property type="project" value="InterPro"/>
</dbReference>
<dbReference type="FunFam" id="3.30.70.20:FF:000001">
    <property type="entry name" value="Photosystem I iron-sulfur center"/>
    <property type="match status" value="1"/>
</dbReference>
<dbReference type="Gene3D" id="3.30.70.20">
    <property type="match status" value="1"/>
</dbReference>
<dbReference type="HAMAP" id="MF_01303">
    <property type="entry name" value="PSI_PsaC"/>
    <property type="match status" value="1"/>
</dbReference>
<dbReference type="InterPro" id="IPR017896">
    <property type="entry name" value="4Fe4S_Fe-S-bd"/>
</dbReference>
<dbReference type="InterPro" id="IPR017900">
    <property type="entry name" value="4Fe4S_Fe_S_CS"/>
</dbReference>
<dbReference type="InterPro" id="IPR050157">
    <property type="entry name" value="PSI_iron-sulfur_center"/>
</dbReference>
<dbReference type="InterPro" id="IPR017491">
    <property type="entry name" value="PSI_PsaC"/>
</dbReference>
<dbReference type="NCBIfam" id="TIGR03048">
    <property type="entry name" value="PS_I_psaC"/>
    <property type="match status" value="1"/>
</dbReference>
<dbReference type="PANTHER" id="PTHR24960:SF79">
    <property type="entry name" value="PHOTOSYSTEM I IRON-SULFUR CENTER"/>
    <property type="match status" value="1"/>
</dbReference>
<dbReference type="PANTHER" id="PTHR24960">
    <property type="entry name" value="PHOTOSYSTEM I IRON-SULFUR CENTER-RELATED"/>
    <property type="match status" value="1"/>
</dbReference>
<dbReference type="Pfam" id="PF14697">
    <property type="entry name" value="Fer4_21"/>
    <property type="match status" value="1"/>
</dbReference>
<dbReference type="SUPFAM" id="SSF54862">
    <property type="entry name" value="4Fe-4S ferredoxins"/>
    <property type="match status" value="1"/>
</dbReference>
<dbReference type="PROSITE" id="PS00198">
    <property type="entry name" value="4FE4S_FER_1"/>
    <property type="match status" value="2"/>
</dbReference>
<dbReference type="PROSITE" id="PS51379">
    <property type="entry name" value="4FE4S_FER_2"/>
    <property type="match status" value="2"/>
</dbReference>
<accession>A4GYW7</accession>
<evidence type="ECO:0000250" key="1"/>
<evidence type="ECO:0000255" key="2">
    <source>
        <dbReference type="HAMAP-Rule" id="MF_01303"/>
    </source>
</evidence>
<gene>
    <name evidence="2" type="primary">psaC</name>
    <name type="ordered locus">Poptr_cp080</name>
</gene>
<proteinExistence type="inferred from homology"/>
<organism>
    <name type="scientific">Populus trichocarpa</name>
    <name type="common">Western balsam poplar</name>
    <name type="synonym">Populus balsamifera subsp. trichocarpa</name>
    <dbReference type="NCBI Taxonomy" id="3694"/>
    <lineage>
        <taxon>Eukaryota</taxon>
        <taxon>Viridiplantae</taxon>
        <taxon>Streptophyta</taxon>
        <taxon>Embryophyta</taxon>
        <taxon>Tracheophyta</taxon>
        <taxon>Spermatophyta</taxon>
        <taxon>Magnoliopsida</taxon>
        <taxon>eudicotyledons</taxon>
        <taxon>Gunneridae</taxon>
        <taxon>Pentapetalae</taxon>
        <taxon>rosids</taxon>
        <taxon>fabids</taxon>
        <taxon>Malpighiales</taxon>
        <taxon>Salicaceae</taxon>
        <taxon>Saliceae</taxon>
        <taxon>Populus</taxon>
    </lineage>
</organism>